<keyword id="KW-0472">Membrane</keyword>
<keyword id="KW-1185">Reference proteome</keyword>
<keyword id="KW-0812">Transmembrane</keyword>
<keyword id="KW-1133">Transmembrane helix</keyword>
<name>RTA1_LEPMJ</name>
<proteinExistence type="evidence at transcript level"/>
<accession>E5AE43</accession>
<protein>
    <recommendedName>
        <fullName evidence="4">Lipid-translocating exporter-like protein RTA1</fullName>
    </recommendedName>
    <alternativeName>
        <fullName evidence="4">Phomenoic acid biosynthesis cluster protein RTA1</fullName>
    </alternativeName>
</protein>
<comment type="function">
    <text evidence="3">Lipid-translocating exporter-like protein; part of the gene cluster that mediates the biosynthesis of phomenoic acid, a long chain aliphatic carboxylic acid that does not appear to be essential for pathogenicity but may play a role in allowing to outcompete other fungi in the environmental niche via its antifungal properties.</text>
</comment>
<comment type="subcellular location">
    <subcellularLocation>
        <location evidence="1">Membrane</location>
        <topology evidence="1">Multi-pass membrane protein</topology>
    </subcellularLocation>
</comment>
<comment type="induction">
    <text evidence="3">Expression is positively regulated by the phomenoic acid biosynthesis cluster-specific transcription regulator C6TF.</text>
</comment>
<comment type="similarity">
    <text evidence="5">Belongs to the lipid-translocating exporter (LTE) (TC 9.A.26.1) family.</text>
</comment>
<feature type="chain" id="PRO_0000446535" description="Lipid-translocating exporter-like protein RTA1">
    <location>
        <begin position="1"/>
        <end position="521"/>
    </location>
</feature>
<feature type="transmembrane region" description="Helical" evidence="1">
    <location>
        <begin position="186"/>
        <end position="206"/>
    </location>
</feature>
<feature type="transmembrane region" description="Helical" evidence="1">
    <location>
        <begin position="211"/>
        <end position="231"/>
    </location>
</feature>
<feature type="transmembrane region" description="Helical" evidence="1">
    <location>
        <begin position="249"/>
        <end position="269"/>
    </location>
</feature>
<feature type="transmembrane region" description="Helical" evidence="1">
    <location>
        <begin position="292"/>
        <end position="312"/>
    </location>
</feature>
<feature type="transmembrane region" description="Helical" evidence="1">
    <location>
        <begin position="332"/>
        <end position="352"/>
    </location>
</feature>
<feature type="transmembrane region" description="Helical" evidence="1">
    <location>
        <begin position="371"/>
        <end position="391"/>
    </location>
</feature>
<feature type="transmembrane region" description="Helical" evidence="1">
    <location>
        <begin position="418"/>
        <end position="438"/>
    </location>
</feature>
<feature type="region of interest" description="Disordered" evidence="2">
    <location>
        <begin position="493"/>
        <end position="521"/>
    </location>
</feature>
<gene>
    <name evidence="4" type="primary">RTA1</name>
    <name type="ORF">LEMA_P002690</name>
</gene>
<reference key="1">
    <citation type="journal article" date="2011" name="Nat. Commun.">
        <title>Effector diversification within compartments of the Leptosphaeria maculans genome affected by Repeat-Induced Point mutations.</title>
        <authorList>
            <person name="Rouxel T."/>
            <person name="Grandaubert J."/>
            <person name="Hane J.K."/>
            <person name="Hoede C."/>
            <person name="van de Wouw A.P."/>
            <person name="Couloux A."/>
            <person name="Dominguez V."/>
            <person name="Anthouard V."/>
            <person name="Bally P."/>
            <person name="Bourras S."/>
            <person name="Cozijnsen A.J."/>
            <person name="Ciuffetti L.M."/>
            <person name="Degrave A."/>
            <person name="Dilmaghani A."/>
            <person name="Duret L."/>
            <person name="Fudal I."/>
            <person name="Goodwin S.B."/>
            <person name="Gout L."/>
            <person name="Glaser N."/>
            <person name="Linglin J."/>
            <person name="Kema G.H.J."/>
            <person name="Lapalu N."/>
            <person name="Lawrence C.B."/>
            <person name="May K."/>
            <person name="Meyer M."/>
            <person name="Ollivier B."/>
            <person name="Poulain J."/>
            <person name="Schoch C.L."/>
            <person name="Simon A."/>
            <person name="Spatafora J.W."/>
            <person name="Stachowiak A."/>
            <person name="Turgeon B.G."/>
            <person name="Tyler B.M."/>
            <person name="Vincent D."/>
            <person name="Weissenbach J."/>
            <person name="Amselem J."/>
            <person name="Quesneville H."/>
            <person name="Oliver R.P."/>
            <person name="Wincker P."/>
            <person name="Balesdent M.-H."/>
            <person name="Howlett B.J."/>
        </authorList>
    </citation>
    <scope>NUCLEOTIDE SEQUENCE [LARGE SCALE GENOMIC DNA]</scope>
    <source>
        <strain>JN3 / isolate v23.1.3 / race Av1-4-5-6-7-8</strain>
    </source>
</reference>
<reference key="2">
    <citation type="journal article" date="2013" name="Fungal Genet. Biol.">
        <title>A gene cluster responsible for biosynthesis of phomenoic acid in the plant pathogenic fungus, Leptosphaeria maculans.</title>
        <authorList>
            <person name="Elliott C.E."/>
            <person name="Callahan D.L."/>
            <person name="Schwenk D."/>
            <person name="Nett M."/>
            <person name="Hoffmeister D."/>
            <person name="Howlett B.J."/>
        </authorList>
    </citation>
    <scope>IDENTIFICATION</scope>
    <scope>FUNCTION</scope>
    <scope>INDUCTION</scope>
</reference>
<evidence type="ECO:0000255" key="1"/>
<evidence type="ECO:0000256" key="2">
    <source>
        <dbReference type="SAM" id="MobiDB-lite"/>
    </source>
</evidence>
<evidence type="ECO:0000269" key="3">
    <source>
    </source>
</evidence>
<evidence type="ECO:0000303" key="4">
    <source>
    </source>
</evidence>
<evidence type="ECO:0000305" key="5"/>
<organism>
    <name type="scientific">Leptosphaeria maculans (strain JN3 / isolate v23.1.3 / race Av1-4-5-6-7-8)</name>
    <name type="common">Blackleg fungus</name>
    <name type="synonym">Phoma lingam</name>
    <dbReference type="NCBI Taxonomy" id="985895"/>
    <lineage>
        <taxon>Eukaryota</taxon>
        <taxon>Fungi</taxon>
        <taxon>Dikarya</taxon>
        <taxon>Ascomycota</taxon>
        <taxon>Pezizomycotina</taxon>
        <taxon>Dothideomycetes</taxon>
        <taxon>Pleosporomycetidae</taxon>
        <taxon>Pleosporales</taxon>
        <taxon>Pleosporineae</taxon>
        <taxon>Leptosphaeriaceae</taxon>
        <taxon>Plenodomus</taxon>
        <taxon>Plenodomus lingam/Leptosphaeria maculans species complex</taxon>
    </lineage>
</organism>
<sequence length="521" mass="58112">MNAYAYTACLGIYGSTPNNEQLVLGSPDQLQRNKPRFRLIVLPHAPAASPFYPPWRSFAPDWEGQGARPMDHFKVGNLRFQLETHRIDEHSTFGKLFGHAPSPSQSCVSFQKKSDRAEPLLLARCSAASWSCIHPPTVLYFVAYQLEYPFAARFSATKISPIQDKMVATSDVPIVGSLYVYAPNKGAPIFFTIAFAISTILHSWQCHRYKAWKLIWLQPACAALFTLGYALREYGAYNYLYDGTEKAPLALFILSQICIYLGPPLLELANYHILGRVFHYVPYAAPFNPGRVTAFFGGLMAIVEGLSGSGVSLTANAKAKESTKKTGHNLLLVALALQVCVIFIFVYLSVLFHRRCIKAKVPAQSKAVKSTLMTLYLSMALIFIRCVFRLVEMATSSTSVDITSMERLMKLSPVLRNEAYFYAFEASLMLINSFLWNVQHPGPHLPGDTHIYLAQDGTEVEGEGDGSEDRPLLLNMANTLMFGLLYRDDKDHTHSQPQELYENPNGNGHKKFRLGNGGRAT</sequence>
<dbReference type="EMBL" id="FP929139">
    <property type="protein sequence ID" value="CBY01482.1"/>
    <property type="molecule type" value="Genomic_DNA"/>
</dbReference>
<dbReference type="RefSeq" id="XP_003844961.1">
    <property type="nucleotide sequence ID" value="XM_003844913.1"/>
</dbReference>
<dbReference type="STRING" id="985895.E5AE43"/>
<dbReference type="EnsemblFungi" id="CBY01482">
    <property type="protein sequence ID" value="CBY01482"/>
    <property type="gene ID" value="LEMA_P002690.1"/>
</dbReference>
<dbReference type="GeneID" id="13290523"/>
<dbReference type="VEuPathDB" id="FungiDB:LEMA_P002690.1"/>
<dbReference type="eggNOG" id="ENOG502RNSS">
    <property type="taxonomic scope" value="Eukaryota"/>
</dbReference>
<dbReference type="HOGENOM" id="CLU_522814_0_0_1"/>
<dbReference type="InParanoid" id="E5AE43"/>
<dbReference type="OrthoDB" id="3358017at2759"/>
<dbReference type="Proteomes" id="UP000002668">
    <property type="component" value="Genome"/>
</dbReference>
<dbReference type="GO" id="GO:0016020">
    <property type="term" value="C:membrane"/>
    <property type="evidence" value="ECO:0007669"/>
    <property type="project" value="UniProtKB-SubCell"/>
</dbReference>
<dbReference type="InterPro" id="IPR007568">
    <property type="entry name" value="RTA1"/>
</dbReference>
<dbReference type="PANTHER" id="PTHR31465:SF34">
    <property type="entry name" value="DOMAIN PROTEIN, PUTATIVE (AFU_ORTHOLOGUE AFUA_3G00480)-RELATED"/>
    <property type="match status" value="1"/>
</dbReference>
<dbReference type="PANTHER" id="PTHR31465">
    <property type="entry name" value="PROTEIN RTA1-RELATED"/>
    <property type="match status" value="1"/>
</dbReference>
<dbReference type="Pfam" id="PF04479">
    <property type="entry name" value="RTA1"/>
    <property type="match status" value="1"/>
</dbReference>